<organism>
    <name type="scientific">Mycobacterium bovis (strain BCG / Pasteur 1173P2)</name>
    <dbReference type="NCBI Taxonomy" id="410289"/>
    <lineage>
        <taxon>Bacteria</taxon>
        <taxon>Bacillati</taxon>
        <taxon>Actinomycetota</taxon>
        <taxon>Actinomycetes</taxon>
        <taxon>Mycobacteriales</taxon>
        <taxon>Mycobacteriaceae</taxon>
        <taxon>Mycobacterium</taxon>
        <taxon>Mycobacterium tuberculosis complex</taxon>
    </lineage>
</organism>
<protein>
    <recommendedName>
        <fullName evidence="1">Urease accessory protein UreG</fullName>
    </recommendedName>
</protein>
<proteinExistence type="inferred from homology"/>
<accession>A1KJR4</accession>
<dbReference type="EMBL" id="AM408590">
    <property type="protein sequence ID" value="CAL71875.1"/>
    <property type="molecule type" value="Genomic_DNA"/>
</dbReference>
<dbReference type="RefSeq" id="WP_003409313.1">
    <property type="nucleotide sequence ID" value="NC_008769.1"/>
</dbReference>
<dbReference type="SMR" id="A1KJR4"/>
<dbReference type="KEGG" id="mbb:BCG_1888"/>
<dbReference type="HOGENOM" id="CLU_072144_1_0_11"/>
<dbReference type="Proteomes" id="UP000001472">
    <property type="component" value="Chromosome"/>
</dbReference>
<dbReference type="GO" id="GO:0005737">
    <property type="term" value="C:cytoplasm"/>
    <property type="evidence" value="ECO:0007669"/>
    <property type="project" value="UniProtKB-SubCell"/>
</dbReference>
<dbReference type="GO" id="GO:0005525">
    <property type="term" value="F:GTP binding"/>
    <property type="evidence" value="ECO:0007669"/>
    <property type="project" value="UniProtKB-KW"/>
</dbReference>
<dbReference type="GO" id="GO:0003924">
    <property type="term" value="F:GTPase activity"/>
    <property type="evidence" value="ECO:0007669"/>
    <property type="project" value="InterPro"/>
</dbReference>
<dbReference type="GO" id="GO:0016151">
    <property type="term" value="F:nickel cation binding"/>
    <property type="evidence" value="ECO:0007669"/>
    <property type="project" value="UniProtKB-UniRule"/>
</dbReference>
<dbReference type="GO" id="GO:0043419">
    <property type="term" value="P:urea catabolic process"/>
    <property type="evidence" value="ECO:0007669"/>
    <property type="project" value="InterPro"/>
</dbReference>
<dbReference type="CDD" id="cd05540">
    <property type="entry name" value="UreG"/>
    <property type="match status" value="1"/>
</dbReference>
<dbReference type="FunFam" id="3.40.50.300:FF:000208">
    <property type="entry name" value="Urease accessory protein UreG"/>
    <property type="match status" value="1"/>
</dbReference>
<dbReference type="Gene3D" id="3.40.50.300">
    <property type="entry name" value="P-loop containing nucleotide triphosphate hydrolases"/>
    <property type="match status" value="1"/>
</dbReference>
<dbReference type="HAMAP" id="MF_01389">
    <property type="entry name" value="UreG"/>
    <property type="match status" value="1"/>
</dbReference>
<dbReference type="InterPro" id="IPR003495">
    <property type="entry name" value="CobW/HypB/UreG_nucleotide-bd"/>
</dbReference>
<dbReference type="InterPro" id="IPR027417">
    <property type="entry name" value="P-loop_NTPase"/>
</dbReference>
<dbReference type="InterPro" id="IPR004400">
    <property type="entry name" value="UreG"/>
</dbReference>
<dbReference type="NCBIfam" id="TIGR00101">
    <property type="entry name" value="ureG"/>
    <property type="match status" value="1"/>
</dbReference>
<dbReference type="PANTHER" id="PTHR31715">
    <property type="entry name" value="UREASE ACCESSORY PROTEIN G"/>
    <property type="match status" value="1"/>
</dbReference>
<dbReference type="PANTHER" id="PTHR31715:SF0">
    <property type="entry name" value="UREASE ACCESSORY PROTEIN G"/>
    <property type="match status" value="1"/>
</dbReference>
<dbReference type="Pfam" id="PF02492">
    <property type="entry name" value="cobW"/>
    <property type="match status" value="1"/>
</dbReference>
<dbReference type="PIRSF" id="PIRSF005624">
    <property type="entry name" value="Ni-bind_GTPase"/>
    <property type="match status" value="1"/>
</dbReference>
<dbReference type="SUPFAM" id="SSF52540">
    <property type="entry name" value="P-loop containing nucleoside triphosphate hydrolases"/>
    <property type="match status" value="1"/>
</dbReference>
<keyword id="KW-0143">Chaperone</keyword>
<keyword id="KW-0963">Cytoplasm</keyword>
<keyword id="KW-0342">GTP-binding</keyword>
<keyword id="KW-0996">Nickel insertion</keyword>
<keyword id="KW-0547">Nucleotide-binding</keyword>
<feature type="chain" id="PRO_1000145188" description="Urease accessory protein UreG">
    <location>
        <begin position="1"/>
        <end position="224"/>
    </location>
</feature>
<feature type="region of interest" description="Disordered" evidence="2">
    <location>
        <begin position="1"/>
        <end position="25"/>
    </location>
</feature>
<feature type="compositionally biased region" description="Basic residues" evidence="2">
    <location>
        <begin position="1"/>
        <end position="20"/>
    </location>
</feature>
<feature type="binding site" evidence="1">
    <location>
        <begin position="32"/>
        <end position="39"/>
    </location>
    <ligand>
        <name>GTP</name>
        <dbReference type="ChEBI" id="CHEBI:37565"/>
    </ligand>
</feature>
<gene>
    <name evidence="1" type="primary">ureG</name>
    <name type="ordered locus">BCG_1888</name>
</gene>
<evidence type="ECO:0000255" key="1">
    <source>
        <dbReference type="HAMAP-Rule" id="MF_01389"/>
    </source>
</evidence>
<evidence type="ECO:0000256" key="2">
    <source>
        <dbReference type="SAM" id="MobiDB-lite"/>
    </source>
</evidence>
<reference key="1">
    <citation type="journal article" date="2007" name="Proc. Natl. Acad. Sci. U.S.A.">
        <title>Genome plasticity of BCG and impact on vaccine efficacy.</title>
        <authorList>
            <person name="Brosch R."/>
            <person name="Gordon S.V."/>
            <person name="Garnier T."/>
            <person name="Eiglmeier K."/>
            <person name="Frigui W."/>
            <person name="Valenti P."/>
            <person name="Dos Santos S."/>
            <person name="Duthoy S."/>
            <person name="Lacroix C."/>
            <person name="Garcia-Pelayo C."/>
            <person name="Inwald J.K."/>
            <person name="Golby P."/>
            <person name="Garcia J.N."/>
            <person name="Hewinson R.G."/>
            <person name="Behr M.A."/>
            <person name="Quail M.A."/>
            <person name="Churcher C."/>
            <person name="Barrell B.G."/>
            <person name="Parkhill J."/>
            <person name="Cole S.T."/>
        </authorList>
    </citation>
    <scope>NUCLEOTIDE SEQUENCE [LARGE SCALE GENOMIC DNA]</scope>
    <source>
        <strain>BCG / Pasteur 1173P2</strain>
    </source>
</reference>
<comment type="function">
    <text evidence="1">Facilitates the functional incorporation of the urease nickel metallocenter. This process requires GTP hydrolysis, probably effectuated by UreG.</text>
</comment>
<comment type="subunit">
    <text evidence="1">Homodimer. UreD, UreF and UreG form a complex that acts as a GTP-hydrolysis-dependent molecular chaperone, activating the urease apoprotein by helping to assemble the nickel containing metallocenter of UreC. The UreE protein probably delivers the nickel.</text>
</comment>
<comment type="subcellular location">
    <subcellularLocation>
        <location evidence="1">Cytoplasm</location>
    </subcellularLocation>
</comment>
<comment type="similarity">
    <text evidence="1">Belongs to the SIMIBI class G3E GTPase family. UreG subfamily.</text>
</comment>
<name>UREG_MYCBP</name>
<sequence length="224" mass="23348">MATHSHPHSHTVPARPRRVRKPGEPLRIGVGGPVGSGKTALVAALCRQLRGELSLAVLTNDIYTTEDADFLRTHAVLPDDRIAAVQTGGCPHTAIRDDITANLDAIDELMAAHDALDLILVESGGDNLTATFSSGLVDAQIFVIDVAGGDKVPRKGGPGVTYSDLLVVNKTDLAALVGADLAVMARDADAVRDGRPTVLQSLTEDPAASDVVAWVRSQLAADGV</sequence>